<feature type="chain" id="PRO_1000200282" description="Xylose isomerase">
    <location>
        <begin position="1"/>
        <end position="440"/>
    </location>
</feature>
<feature type="active site" evidence="1">
    <location>
        <position position="100"/>
    </location>
</feature>
<feature type="active site" evidence="1">
    <location>
        <position position="103"/>
    </location>
</feature>
<feature type="binding site" evidence="1">
    <location>
        <position position="231"/>
    </location>
    <ligand>
        <name>Mg(2+)</name>
        <dbReference type="ChEBI" id="CHEBI:18420"/>
        <label>1</label>
    </ligand>
</feature>
<feature type="binding site" evidence="1">
    <location>
        <position position="267"/>
    </location>
    <ligand>
        <name>Mg(2+)</name>
        <dbReference type="ChEBI" id="CHEBI:18420"/>
        <label>1</label>
    </ligand>
</feature>
<feature type="binding site" evidence="1">
    <location>
        <position position="267"/>
    </location>
    <ligand>
        <name>Mg(2+)</name>
        <dbReference type="ChEBI" id="CHEBI:18420"/>
        <label>2</label>
    </ligand>
</feature>
<feature type="binding site" evidence="1">
    <location>
        <position position="270"/>
    </location>
    <ligand>
        <name>Mg(2+)</name>
        <dbReference type="ChEBI" id="CHEBI:18420"/>
        <label>2</label>
    </ligand>
</feature>
<feature type="binding site" evidence="1">
    <location>
        <position position="295"/>
    </location>
    <ligand>
        <name>Mg(2+)</name>
        <dbReference type="ChEBI" id="CHEBI:18420"/>
        <label>1</label>
    </ligand>
</feature>
<feature type="binding site" evidence="1">
    <location>
        <position position="306"/>
    </location>
    <ligand>
        <name>Mg(2+)</name>
        <dbReference type="ChEBI" id="CHEBI:18420"/>
        <label>2</label>
    </ligand>
</feature>
<feature type="binding site" evidence="1">
    <location>
        <position position="308"/>
    </location>
    <ligand>
        <name>Mg(2+)</name>
        <dbReference type="ChEBI" id="CHEBI:18420"/>
        <label>2</label>
    </ligand>
</feature>
<feature type="binding site" evidence="1">
    <location>
        <position position="338"/>
    </location>
    <ligand>
        <name>Mg(2+)</name>
        <dbReference type="ChEBI" id="CHEBI:18420"/>
        <label>1</label>
    </ligand>
</feature>
<dbReference type="EC" id="5.3.1.5" evidence="1"/>
<dbReference type="EMBL" id="CP000960">
    <property type="protein sequence ID" value="ACA95444.1"/>
    <property type="molecule type" value="Genomic_DNA"/>
</dbReference>
<dbReference type="RefSeq" id="WP_012336850.1">
    <property type="nucleotide sequence ID" value="NC_010512.1"/>
</dbReference>
<dbReference type="SMR" id="B1KB47"/>
<dbReference type="GeneID" id="83052965"/>
<dbReference type="KEGG" id="bcm:Bcenmc03_6329"/>
<dbReference type="HOGENOM" id="CLU_037261_1_0_4"/>
<dbReference type="Proteomes" id="UP000002169">
    <property type="component" value="Chromosome 3"/>
</dbReference>
<dbReference type="GO" id="GO:0005737">
    <property type="term" value="C:cytoplasm"/>
    <property type="evidence" value="ECO:0007669"/>
    <property type="project" value="UniProtKB-SubCell"/>
</dbReference>
<dbReference type="GO" id="GO:0000287">
    <property type="term" value="F:magnesium ion binding"/>
    <property type="evidence" value="ECO:0007669"/>
    <property type="project" value="UniProtKB-UniRule"/>
</dbReference>
<dbReference type="GO" id="GO:0009045">
    <property type="term" value="F:xylose isomerase activity"/>
    <property type="evidence" value="ECO:0007669"/>
    <property type="project" value="UniProtKB-UniRule"/>
</dbReference>
<dbReference type="GO" id="GO:0042732">
    <property type="term" value="P:D-xylose metabolic process"/>
    <property type="evidence" value="ECO:0007669"/>
    <property type="project" value="UniProtKB-UniRule"/>
</dbReference>
<dbReference type="FunFam" id="3.20.20.150:FF:000002">
    <property type="entry name" value="Xylose isomerase"/>
    <property type="match status" value="1"/>
</dbReference>
<dbReference type="Gene3D" id="3.20.20.150">
    <property type="entry name" value="Divalent-metal-dependent TIM barrel enzymes"/>
    <property type="match status" value="1"/>
</dbReference>
<dbReference type="HAMAP" id="MF_00455">
    <property type="entry name" value="Xylose_isom_A"/>
    <property type="match status" value="1"/>
</dbReference>
<dbReference type="InterPro" id="IPR036237">
    <property type="entry name" value="Xyl_isomerase-like_sf"/>
</dbReference>
<dbReference type="InterPro" id="IPR013452">
    <property type="entry name" value="Xylose_isom_bac"/>
</dbReference>
<dbReference type="InterPro" id="IPR001998">
    <property type="entry name" value="Xylose_isomerase"/>
</dbReference>
<dbReference type="NCBIfam" id="NF003998">
    <property type="entry name" value="PRK05474.1"/>
    <property type="match status" value="1"/>
</dbReference>
<dbReference type="NCBIfam" id="TIGR02630">
    <property type="entry name" value="xylose_isom_A"/>
    <property type="match status" value="1"/>
</dbReference>
<dbReference type="PANTHER" id="PTHR48408">
    <property type="match status" value="1"/>
</dbReference>
<dbReference type="PANTHER" id="PTHR48408:SF1">
    <property type="entry name" value="XYLOSE ISOMERASE"/>
    <property type="match status" value="1"/>
</dbReference>
<dbReference type="PRINTS" id="PR00688">
    <property type="entry name" value="XYLOSISMRASE"/>
</dbReference>
<dbReference type="SUPFAM" id="SSF51658">
    <property type="entry name" value="Xylose isomerase-like"/>
    <property type="match status" value="1"/>
</dbReference>
<dbReference type="PROSITE" id="PS51415">
    <property type="entry name" value="XYLOSE_ISOMERASE"/>
    <property type="match status" value="1"/>
</dbReference>
<comment type="catalytic activity">
    <reaction evidence="1">
        <text>alpha-D-xylose = alpha-D-xylulofuranose</text>
        <dbReference type="Rhea" id="RHEA:22816"/>
        <dbReference type="ChEBI" id="CHEBI:28518"/>
        <dbReference type="ChEBI" id="CHEBI:188998"/>
        <dbReference type="EC" id="5.3.1.5"/>
    </reaction>
</comment>
<comment type="cofactor">
    <cofactor evidence="1">
        <name>Mg(2+)</name>
        <dbReference type="ChEBI" id="CHEBI:18420"/>
    </cofactor>
    <text evidence="1">Binds 2 magnesium ions per subunit.</text>
</comment>
<comment type="subunit">
    <text evidence="1">Homotetramer.</text>
</comment>
<comment type="subcellular location">
    <subcellularLocation>
        <location evidence="1">Cytoplasm</location>
    </subcellularLocation>
</comment>
<comment type="similarity">
    <text evidence="1">Belongs to the xylose isomerase family.</text>
</comment>
<proteinExistence type="inferred from homology"/>
<accession>B1KB47</accession>
<protein>
    <recommendedName>
        <fullName evidence="1">Xylose isomerase</fullName>
        <ecNumber evidence="1">5.3.1.5</ecNumber>
    </recommendedName>
</protein>
<organism>
    <name type="scientific">Burkholderia orbicola (strain MC0-3)</name>
    <dbReference type="NCBI Taxonomy" id="406425"/>
    <lineage>
        <taxon>Bacteria</taxon>
        <taxon>Pseudomonadati</taxon>
        <taxon>Pseudomonadota</taxon>
        <taxon>Betaproteobacteria</taxon>
        <taxon>Burkholderiales</taxon>
        <taxon>Burkholderiaceae</taxon>
        <taxon>Burkholderia</taxon>
        <taxon>Burkholderia cepacia complex</taxon>
        <taxon>Burkholderia orbicola</taxon>
    </lineage>
</organism>
<name>XYLA_BURO0</name>
<sequence>MSYFEHIPAIRYEGPQSDNPLAYHHYDPDKRVLGKTLAEHLRIAVCYWHTFVWPGHDIFGQGAFQRPWQQPGDALERARQKADAAFEFFTKLGTPFYTFHDTDVAPEGDSLRDYAANFARMVDYLGERQHASGVRLLWGTANLFSHPRFAAGAATNPNPDVFAWAATQVCHALDATHRLGGENYVLWGGREGYETLLNTDLKRERDQFARFLSMVVEHKHRIGFKGALLIEPKPQEPTKHQYDYDVATVHGFLVQYGLQNEIRVNIEANHATLAGHSFHHEIANAFALGVFGSVDANRGDPQNGWDTDQFPNSVEELTLAFYEILRHGGFTTGGMNFDAKVRRQSIDPEDLFYGHVGAIDVLALALERAAVLVENDRLDALRRQRYAQWDDAFGRKILSGGYTLESLAADALARGVNPRHASGAQERLENIVNQAIYGLR</sequence>
<gene>
    <name evidence="1" type="primary">xylA</name>
    <name type="ordered locus">Bcenmc03_6329</name>
</gene>
<reference key="1">
    <citation type="submission" date="2008-02" db="EMBL/GenBank/DDBJ databases">
        <title>Complete sequence of chromosome 3 of Burkholderia cenocepacia MC0-3.</title>
        <authorList>
            <person name="Copeland A."/>
            <person name="Lucas S."/>
            <person name="Lapidus A."/>
            <person name="Barry K."/>
            <person name="Bruce D."/>
            <person name="Goodwin L."/>
            <person name="Glavina del Rio T."/>
            <person name="Dalin E."/>
            <person name="Tice H."/>
            <person name="Pitluck S."/>
            <person name="Chain P."/>
            <person name="Malfatti S."/>
            <person name="Shin M."/>
            <person name="Vergez L."/>
            <person name="Schmutz J."/>
            <person name="Larimer F."/>
            <person name="Land M."/>
            <person name="Hauser L."/>
            <person name="Kyrpides N."/>
            <person name="Mikhailova N."/>
            <person name="Tiedje J."/>
            <person name="Richardson P."/>
        </authorList>
    </citation>
    <scope>NUCLEOTIDE SEQUENCE [LARGE SCALE GENOMIC DNA]</scope>
    <source>
        <strain>MC0-3</strain>
    </source>
</reference>
<evidence type="ECO:0000255" key="1">
    <source>
        <dbReference type="HAMAP-Rule" id="MF_00455"/>
    </source>
</evidence>
<keyword id="KW-0119">Carbohydrate metabolism</keyword>
<keyword id="KW-0963">Cytoplasm</keyword>
<keyword id="KW-0413">Isomerase</keyword>
<keyword id="KW-0460">Magnesium</keyword>
<keyword id="KW-0479">Metal-binding</keyword>
<keyword id="KW-0859">Xylose metabolism</keyword>